<accession>Q4FLS6</accession>
<organism>
    <name type="scientific">Pelagibacter ubique (strain HTCC1062)</name>
    <dbReference type="NCBI Taxonomy" id="335992"/>
    <lineage>
        <taxon>Bacteria</taxon>
        <taxon>Pseudomonadati</taxon>
        <taxon>Pseudomonadota</taxon>
        <taxon>Alphaproteobacteria</taxon>
        <taxon>Candidatus Pelagibacterales</taxon>
        <taxon>Candidatus Pelagibacteraceae</taxon>
        <taxon>Candidatus Pelagibacter</taxon>
    </lineage>
</organism>
<reference key="1">
    <citation type="journal article" date="2005" name="Science">
        <title>Genome streamlining in a cosmopolitan oceanic bacterium.</title>
        <authorList>
            <person name="Giovannoni S.J."/>
            <person name="Tripp H.J."/>
            <person name="Givan S."/>
            <person name="Podar M."/>
            <person name="Vergin K.L."/>
            <person name="Baptista D."/>
            <person name="Bibbs L."/>
            <person name="Eads J."/>
            <person name="Richardson T.H."/>
            <person name="Noordewier M."/>
            <person name="Rappe M.S."/>
            <person name="Short J.M."/>
            <person name="Carrington J.C."/>
            <person name="Mathur E.J."/>
        </authorList>
    </citation>
    <scope>NUCLEOTIDE SEQUENCE [LARGE SCALE GENOMIC DNA]</scope>
    <source>
        <strain>HTCC1062</strain>
    </source>
</reference>
<feature type="chain" id="PRO_0000231823" description="Pyridoxine 5'-phosphate synthase">
    <location>
        <begin position="1"/>
        <end position="239"/>
    </location>
</feature>
<feature type="active site" description="Proton acceptor" evidence="1">
    <location>
        <position position="43"/>
    </location>
</feature>
<feature type="active site" description="Proton acceptor" evidence="1">
    <location>
        <position position="70"/>
    </location>
</feature>
<feature type="active site" description="Proton donor" evidence="1">
    <location>
        <position position="192"/>
    </location>
</feature>
<feature type="binding site" evidence="1">
    <location>
        <position position="7"/>
    </location>
    <ligand>
        <name>3-amino-2-oxopropyl phosphate</name>
        <dbReference type="ChEBI" id="CHEBI:57279"/>
    </ligand>
</feature>
<feature type="binding site" evidence="1">
    <location>
        <begin position="9"/>
        <end position="10"/>
    </location>
    <ligand>
        <name>1-deoxy-D-xylulose 5-phosphate</name>
        <dbReference type="ChEBI" id="CHEBI:57792"/>
    </ligand>
</feature>
<feature type="binding site" evidence="1">
    <location>
        <position position="18"/>
    </location>
    <ligand>
        <name>3-amino-2-oxopropyl phosphate</name>
        <dbReference type="ChEBI" id="CHEBI:57279"/>
    </ligand>
</feature>
<feature type="binding site" evidence="1">
    <location>
        <position position="45"/>
    </location>
    <ligand>
        <name>1-deoxy-D-xylulose 5-phosphate</name>
        <dbReference type="ChEBI" id="CHEBI:57792"/>
    </ligand>
</feature>
<feature type="binding site" evidence="1">
    <location>
        <position position="50"/>
    </location>
    <ligand>
        <name>1-deoxy-D-xylulose 5-phosphate</name>
        <dbReference type="ChEBI" id="CHEBI:57792"/>
    </ligand>
</feature>
<feature type="binding site" evidence="1">
    <location>
        <position position="100"/>
    </location>
    <ligand>
        <name>1-deoxy-D-xylulose 5-phosphate</name>
        <dbReference type="ChEBI" id="CHEBI:57792"/>
    </ligand>
</feature>
<feature type="binding site" evidence="1">
    <location>
        <position position="193"/>
    </location>
    <ligand>
        <name>3-amino-2-oxopropyl phosphate</name>
        <dbReference type="ChEBI" id="CHEBI:57279"/>
    </ligand>
</feature>
<feature type="binding site" evidence="1">
    <location>
        <begin position="214"/>
        <end position="215"/>
    </location>
    <ligand>
        <name>3-amino-2-oxopropyl phosphate</name>
        <dbReference type="ChEBI" id="CHEBI:57279"/>
    </ligand>
</feature>
<feature type="site" description="Transition state stabilizer" evidence="1">
    <location>
        <position position="151"/>
    </location>
</feature>
<comment type="function">
    <text evidence="1">Catalyzes the complicated ring closure reaction between the two acyclic compounds 1-deoxy-D-xylulose-5-phosphate (DXP) and 3-amino-2-oxopropyl phosphate (1-amino-acetone-3-phosphate or AAP) to form pyridoxine 5'-phosphate (PNP) and inorganic phosphate.</text>
</comment>
<comment type="catalytic activity">
    <reaction evidence="1">
        <text>3-amino-2-oxopropyl phosphate + 1-deoxy-D-xylulose 5-phosphate = pyridoxine 5'-phosphate + phosphate + 2 H2O + H(+)</text>
        <dbReference type="Rhea" id="RHEA:15265"/>
        <dbReference type="ChEBI" id="CHEBI:15377"/>
        <dbReference type="ChEBI" id="CHEBI:15378"/>
        <dbReference type="ChEBI" id="CHEBI:43474"/>
        <dbReference type="ChEBI" id="CHEBI:57279"/>
        <dbReference type="ChEBI" id="CHEBI:57792"/>
        <dbReference type="ChEBI" id="CHEBI:58589"/>
        <dbReference type="EC" id="2.6.99.2"/>
    </reaction>
</comment>
<comment type="pathway">
    <text evidence="1">Cofactor biosynthesis; pyridoxine 5'-phosphate biosynthesis; pyridoxine 5'-phosphate from D-erythrose 4-phosphate: step 5/5.</text>
</comment>
<comment type="subunit">
    <text evidence="1">Homooctamer; tetramer of dimers.</text>
</comment>
<comment type="subcellular location">
    <subcellularLocation>
        <location evidence="1">Cytoplasm</location>
    </subcellularLocation>
</comment>
<comment type="similarity">
    <text evidence="1">Belongs to the PNP synthase family.</text>
</comment>
<gene>
    <name evidence="1" type="primary">pdxJ</name>
    <name type="ordered locus">SAR11_1056</name>
</gene>
<evidence type="ECO:0000255" key="1">
    <source>
        <dbReference type="HAMAP-Rule" id="MF_00279"/>
    </source>
</evidence>
<protein>
    <recommendedName>
        <fullName evidence="1">Pyridoxine 5'-phosphate synthase</fullName>
        <shortName evidence="1">PNP synthase</shortName>
        <ecNumber evidence="1">2.6.99.2</ecNumber>
    </recommendedName>
</protein>
<name>PDXJ_PELUB</name>
<dbReference type="EC" id="2.6.99.2" evidence="1"/>
<dbReference type="EMBL" id="CP000084">
    <property type="protein sequence ID" value="AAZ21862.1"/>
    <property type="molecule type" value="Genomic_DNA"/>
</dbReference>
<dbReference type="RefSeq" id="WP_006996869.1">
    <property type="nucleotide sequence ID" value="NC_007205.1"/>
</dbReference>
<dbReference type="SMR" id="Q4FLS6"/>
<dbReference type="STRING" id="335992.SAR11_1056"/>
<dbReference type="GeneID" id="66295547"/>
<dbReference type="KEGG" id="pub:SAR11_1056"/>
<dbReference type="eggNOG" id="COG0854">
    <property type="taxonomic scope" value="Bacteria"/>
</dbReference>
<dbReference type="HOGENOM" id="CLU_074563_0_0_5"/>
<dbReference type="OrthoDB" id="9806590at2"/>
<dbReference type="UniPathway" id="UPA00244">
    <property type="reaction ID" value="UER00313"/>
</dbReference>
<dbReference type="Proteomes" id="UP000002528">
    <property type="component" value="Chromosome"/>
</dbReference>
<dbReference type="GO" id="GO:0005829">
    <property type="term" value="C:cytosol"/>
    <property type="evidence" value="ECO:0007669"/>
    <property type="project" value="TreeGrafter"/>
</dbReference>
<dbReference type="GO" id="GO:0033856">
    <property type="term" value="F:pyridoxine 5'-phosphate synthase activity"/>
    <property type="evidence" value="ECO:0007669"/>
    <property type="project" value="UniProtKB-EC"/>
</dbReference>
<dbReference type="GO" id="GO:0008615">
    <property type="term" value="P:pyridoxine biosynthetic process"/>
    <property type="evidence" value="ECO:0007669"/>
    <property type="project" value="UniProtKB-UniRule"/>
</dbReference>
<dbReference type="CDD" id="cd00003">
    <property type="entry name" value="PNPsynthase"/>
    <property type="match status" value="1"/>
</dbReference>
<dbReference type="Gene3D" id="3.20.20.70">
    <property type="entry name" value="Aldolase class I"/>
    <property type="match status" value="1"/>
</dbReference>
<dbReference type="HAMAP" id="MF_00279">
    <property type="entry name" value="PdxJ"/>
    <property type="match status" value="1"/>
</dbReference>
<dbReference type="InterPro" id="IPR013785">
    <property type="entry name" value="Aldolase_TIM"/>
</dbReference>
<dbReference type="InterPro" id="IPR004569">
    <property type="entry name" value="PyrdxlP_synth_PdxJ"/>
</dbReference>
<dbReference type="InterPro" id="IPR036130">
    <property type="entry name" value="Pyridoxine-5'_phos_synth"/>
</dbReference>
<dbReference type="NCBIfam" id="TIGR00559">
    <property type="entry name" value="pdxJ"/>
    <property type="match status" value="1"/>
</dbReference>
<dbReference type="NCBIfam" id="NF003625">
    <property type="entry name" value="PRK05265.1-3"/>
    <property type="match status" value="1"/>
</dbReference>
<dbReference type="NCBIfam" id="NF003627">
    <property type="entry name" value="PRK05265.1-5"/>
    <property type="match status" value="1"/>
</dbReference>
<dbReference type="PANTHER" id="PTHR30456">
    <property type="entry name" value="PYRIDOXINE 5'-PHOSPHATE SYNTHASE"/>
    <property type="match status" value="1"/>
</dbReference>
<dbReference type="PANTHER" id="PTHR30456:SF0">
    <property type="entry name" value="PYRIDOXINE 5'-PHOSPHATE SYNTHASE"/>
    <property type="match status" value="1"/>
</dbReference>
<dbReference type="Pfam" id="PF03740">
    <property type="entry name" value="PdxJ"/>
    <property type="match status" value="1"/>
</dbReference>
<dbReference type="SUPFAM" id="SSF63892">
    <property type="entry name" value="Pyridoxine 5'-phosphate synthase"/>
    <property type="match status" value="1"/>
</dbReference>
<keyword id="KW-0963">Cytoplasm</keyword>
<keyword id="KW-0664">Pyridoxine biosynthesis</keyword>
<keyword id="KW-1185">Reference proteome</keyword>
<keyword id="KW-0808">Transferase</keyword>
<proteinExistence type="inferred from homology"/>
<sequence>MKRLGVNIDHVATVRNARGSFHPDPFTIAKHVIKCGAHSVTIHLREDRRHIKDSDVVKICKSRKIITNLEISLNKEIIDIALKNRPNFICIVPEKRKEVTTEGGLNLIKNKKKIKSIISLFNKKSIRTSLFIDPNLKDIKIAKELNATCVELHTGKISNLIKENKSYKNEYLKIKKCSELGVKLGIEVHAGHGLDYKTTSILSKIKEITEFNIGHFIIGESLTHGLKKTITIFKEITNK</sequence>